<dbReference type="EC" id="4.2.1.33" evidence="1"/>
<dbReference type="EMBL" id="CP000697">
    <property type="protein sequence ID" value="ABQ31348.1"/>
    <property type="molecule type" value="Genomic_DNA"/>
</dbReference>
<dbReference type="RefSeq" id="WP_012039843.1">
    <property type="nucleotide sequence ID" value="NC_009484.1"/>
</dbReference>
<dbReference type="SMR" id="A5G0G6"/>
<dbReference type="STRING" id="349163.Acry_2149"/>
<dbReference type="KEGG" id="acr:Acry_2149"/>
<dbReference type="eggNOG" id="COG0065">
    <property type="taxonomic scope" value="Bacteria"/>
</dbReference>
<dbReference type="HOGENOM" id="CLU_006714_3_4_5"/>
<dbReference type="UniPathway" id="UPA00048">
    <property type="reaction ID" value="UER00071"/>
</dbReference>
<dbReference type="Proteomes" id="UP000000245">
    <property type="component" value="Chromosome"/>
</dbReference>
<dbReference type="GO" id="GO:0003861">
    <property type="term" value="F:3-isopropylmalate dehydratase activity"/>
    <property type="evidence" value="ECO:0007669"/>
    <property type="project" value="UniProtKB-UniRule"/>
</dbReference>
<dbReference type="GO" id="GO:0051539">
    <property type="term" value="F:4 iron, 4 sulfur cluster binding"/>
    <property type="evidence" value="ECO:0007669"/>
    <property type="project" value="UniProtKB-KW"/>
</dbReference>
<dbReference type="GO" id="GO:0046872">
    <property type="term" value="F:metal ion binding"/>
    <property type="evidence" value="ECO:0007669"/>
    <property type="project" value="UniProtKB-KW"/>
</dbReference>
<dbReference type="GO" id="GO:0009098">
    <property type="term" value="P:L-leucine biosynthetic process"/>
    <property type="evidence" value="ECO:0007669"/>
    <property type="project" value="UniProtKB-UniRule"/>
</dbReference>
<dbReference type="CDD" id="cd01583">
    <property type="entry name" value="IPMI"/>
    <property type="match status" value="1"/>
</dbReference>
<dbReference type="FunFam" id="3.30.499.10:FF:000007">
    <property type="entry name" value="3-isopropylmalate dehydratase large subunit"/>
    <property type="match status" value="1"/>
</dbReference>
<dbReference type="Gene3D" id="3.30.499.10">
    <property type="entry name" value="Aconitase, domain 3"/>
    <property type="match status" value="2"/>
</dbReference>
<dbReference type="HAMAP" id="MF_01026">
    <property type="entry name" value="LeuC_type1"/>
    <property type="match status" value="1"/>
</dbReference>
<dbReference type="InterPro" id="IPR004430">
    <property type="entry name" value="3-IsopropMal_deHydase_lsu"/>
</dbReference>
<dbReference type="InterPro" id="IPR015931">
    <property type="entry name" value="Acnase/IPM_dHydase_lsu_aba_1/3"/>
</dbReference>
<dbReference type="InterPro" id="IPR001030">
    <property type="entry name" value="Acoase/IPM_deHydtase_lsu_aba"/>
</dbReference>
<dbReference type="InterPro" id="IPR018136">
    <property type="entry name" value="Aconitase_4Fe-4S_BS"/>
</dbReference>
<dbReference type="InterPro" id="IPR036008">
    <property type="entry name" value="Aconitase_4Fe-4S_dom"/>
</dbReference>
<dbReference type="InterPro" id="IPR050067">
    <property type="entry name" value="IPM_dehydratase_rel_enz"/>
</dbReference>
<dbReference type="InterPro" id="IPR033941">
    <property type="entry name" value="IPMI_cat"/>
</dbReference>
<dbReference type="NCBIfam" id="TIGR00170">
    <property type="entry name" value="leuC"/>
    <property type="match status" value="1"/>
</dbReference>
<dbReference type="NCBIfam" id="NF004016">
    <property type="entry name" value="PRK05478.1"/>
    <property type="match status" value="1"/>
</dbReference>
<dbReference type="NCBIfam" id="NF009116">
    <property type="entry name" value="PRK12466.1"/>
    <property type="match status" value="1"/>
</dbReference>
<dbReference type="PANTHER" id="PTHR43822:SF9">
    <property type="entry name" value="3-ISOPROPYLMALATE DEHYDRATASE"/>
    <property type="match status" value="1"/>
</dbReference>
<dbReference type="PANTHER" id="PTHR43822">
    <property type="entry name" value="HOMOACONITASE, MITOCHONDRIAL-RELATED"/>
    <property type="match status" value="1"/>
</dbReference>
<dbReference type="Pfam" id="PF00330">
    <property type="entry name" value="Aconitase"/>
    <property type="match status" value="1"/>
</dbReference>
<dbReference type="PRINTS" id="PR00415">
    <property type="entry name" value="ACONITASE"/>
</dbReference>
<dbReference type="SUPFAM" id="SSF53732">
    <property type="entry name" value="Aconitase iron-sulfur domain"/>
    <property type="match status" value="1"/>
</dbReference>
<dbReference type="PROSITE" id="PS00450">
    <property type="entry name" value="ACONITASE_1"/>
    <property type="match status" value="1"/>
</dbReference>
<dbReference type="PROSITE" id="PS01244">
    <property type="entry name" value="ACONITASE_2"/>
    <property type="match status" value="1"/>
</dbReference>
<evidence type="ECO:0000255" key="1">
    <source>
        <dbReference type="HAMAP-Rule" id="MF_01026"/>
    </source>
</evidence>
<feature type="chain" id="PRO_0000319804" description="3-isopropylmalate dehydratase large subunit">
    <location>
        <begin position="1"/>
        <end position="466"/>
    </location>
</feature>
<feature type="binding site" evidence="1">
    <location>
        <position position="347"/>
    </location>
    <ligand>
        <name>[4Fe-4S] cluster</name>
        <dbReference type="ChEBI" id="CHEBI:49883"/>
    </ligand>
</feature>
<feature type="binding site" evidence="1">
    <location>
        <position position="407"/>
    </location>
    <ligand>
        <name>[4Fe-4S] cluster</name>
        <dbReference type="ChEBI" id="CHEBI:49883"/>
    </ligand>
</feature>
<feature type="binding site" evidence="1">
    <location>
        <position position="410"/>
    </location>
    <ligand>
        <name>[4Fe-4S] cluster</name>
        <dbReference type="ChEBI" id="CHEBI:49883"/>
    </ligand>
</feature>
<proteinExistence type="inferred from homology"/>
<keyword id="KW-0004">4Fe-4S</keyword>
<keyword id="KW-0028">Amino-acid biosynthesis</keyword>
<keyword id="KW-0100">Branched-chain amino acid biosynthesis</keyword>
<keyword id="KW-0408">Iron</keyword>
<keyword id="KW-0411">Iron-sulfur</keyword>
<keyword id="KW-0432">Leucine biosynthesis</keyword>
<keyword id="KW-0456">Lyase</keyword>
<keyword id="KW-0479">Metal-binding</keyword>
<keyword id="KW-1185">Reference proteome</keyword>
<organism>
    <name type="scientific">Acidiphilium cryptum (strain JF-5)</name>
    <dbReference type="NCBI Taxonomy" id="349163"/>
    <lineage>
        <taxon>Bacteria</taxon>
        <taxon>Pseudomonadati</taxon>
        <taxon>Pseudomonadota</taxon>
        <taxon>Alphaproteobacteria</taxon>
        <taxon>Acetobacterales</taxon>
        <taxon>Acidocellaceae</taxon>
        <taxon>Acidiphilium</taxon>
    </lineage>
</organism>
<sequence>MASTLFDKIWAAHVVDRMPDGTAVLYIDRHLVHEVTSPQAFEGLRMAGRKVRRVDATIAVADHNVPTEDRAAGIAEPESALQVATLEQNVAAFGVPYIPVTDARQGIVHVIGPEQGISLPGMTIVCGDSHTSTHGAMGALAFGIGTSEVEHVLATQTLLQKPAKNMLVRVDGTLPPGCSAKDIVLAIIGEIGTAGGTGHVIEYAGEAIRALDMAGRMTVCNMSIEAGARAGLIAPDETTFEYVRGRPYAPKGEALERAIDYWKTLASDEGAQYDRVVTIDASALVPQVTWGTSPETVVPITGHVPDPAAEPDAGRRAQMERMLQYMDLAPGQALKGTKIDAVFIGSCTNSRIEDLRVAAGIVRGKKVAGHVRAMVVPGSGLVKAQAEAEGLAQVFLDAGFEWREAGCSMCLGMNPDKLKPGERCASTSNRNFEGRQGPGGRTHLVSPAMAAASAITGALADPREMA</sequence>
<gene>
    <name evidence="1" type="primary">leuC</name>
    <name type="ordered locus">Acry_2149</name>
</gene>
<comment type="function">
    <text evidence="1">Catalyzes the isomerization between 2-isopropylmalate and 3-isopropylmalate, via the formation of 2-isopropylmaleate.</text>
</comment>
<comment type="catalytic activity">
    <reaction evidence="1">
        <text>(2R,3S)-3-isopropylmalate = (2S)-2-isopropylmalate</text>
        <dbReference type="Rhea" id="RHEA:32287"/>
        <dbReference type="ChEBI" id="CHEBI:1178"/>
        <dbReference type="ChEBI" id="CHEBI:35121"/>
        <dbReference type="EC" id="4.2.1.33"/>
    </reaction>
</comment>
<comment type="cofactor">
    <cofactor evidence="1">
        <name>[4Fe-4S] cluster</name>
        <dbReference type="ChEBI" id="CHEBI:49883"/>
    </cofactor>
    <text evidence="1">Binds 1 [4Fe-4S] cluster per subunit.</text>
</comment>
<comment type="pathway">
    <text evidence="1">Amino-acid biosynthesis; L-leucine biosynthesis; L-leucine from 3-methyl-2-oxobutanoate: step 2/4.</text>
</comment>
<comment type="subunit">
    <text evidence="1">Heterodimer of LeuC and LeuD.</text>
</comment>
<comment type="similarity">
    <text evidence="1">Belongs to the aconitase/IPM isomerase family. LeuC type 1 subfamily.</text>
</comment>
<accession>A5G0G6</accession>
<name>LEUC_ACICJ</name>
<reference key="1">
    <citation type="submission" date="2007-05" db="EMBL/GenBank/DDBJ databases">
        <title>Complete sequence of chromosome of Acidiphilium cryptum JF-5.</title>
        <authorList>
            <consortium name="US DOE Joint Genome Institute"/>
            <person name="Copeland A."/>
            <person name="Lucas S."/>
            <person name="Lapidus A."/>
            <person name="Barry K."/>
            <person name="Detter J.C."/>
            <person name="Glavina del Rio T."/>
            <person name="Hammon N."/>
            <person name="Israni S."/>
            <person name="Dalin E."/>
            <person name="Tice H."/>
            <person name="Pitluck S."/>
            <person name="Sims D."/>
            <person name="Brettin T."/>
            <person name="Bruce D."/>
            <person name="Han C."/>
            <person name="Schmutz J."/>
            <person name="Larimer F."/>
            <person name="Land M."/>
            <person name="Hauser L."/>
            <person name="Kyrpides N."/>
            <person name="Kim E."/>
            <person name="Magnuson T."/>
            <person name="Richardson P."/>
        </authorList>
    </citation>
    <scope>NUCLEOTIDE SEQUENCE [LARGE SCALE GENOMIC DNA]</scope>
    <source>
        <strain>JF-5</strain>
    </source>
</reference>
<protein>
    <recommendedName>
        <fullName evidence="1">3-isopropylmalate dehydratase large subunit</fullName>
        <ecNumber evidence="1">4.2.1.33</ecNumber>
    </recommendedName>
    <alternativeName>
        <fullName evidence="1">Alpha-IPM isomerase</fullName>
        <shortName evidence="1">IPMI</shortName>
    </alternativeName>
    <alternativeName>
        <fullName evidence="1">Isopropylmalate isomerase</fullName>
    </alternativeName>
</protein>